<protein>
    <recommendedName>
        <fullName>Probable leucine aminopeptidase ARB_01443</fullName>
        <ecNumber>3.4.11.-</ecNumber>
    </recommendedName>
    <alternativeName>
        <fullName>Leucyl aminopeptidase ARB_01443</fullName>
    </alternativeName>
</protein>
<organism>
    <name type="scientific">Arthroderma benhamiae (strain ATCC MYA-4681 / CBS 112371)</name>
    <name type="common">Trichophyton mentagrophytes</name>
    <dbReference type="NCBI Taxonomy" id="663331"/>
    <lineage>
        <taxon>Eukaryota</taxon>
        <taxon>Fungi</taxon>
        <taxon>Dikarya</taxon>
        <taxon>Ascomycota</taxon>
        <taxon>Pezizomycotina</taxon>
        <taxon>Eurotiomycetes</taxon>
        <taxon>Eurotiomycetidae</taxon>
        <taxon>Onygenales</taxon>
        <taxon>Arthrodermataceae</taxon>
        <taxon>Trichophyton</taxon>
    </lineage>
</organism>
<dbReference type="EC" id="3.4.11.-"/>
<dbReference type="EMBL" id="ABSU01000019">
    <property type="protein sequence ID" value="EFE31843.1"/>
    <property type="molecule type" value="Genomic_DNA"/>
</dbReference>
<dbReference type="RefSeq" id="XP_003012483.1">
    <property type="nucleotide sequence ID" value="XM_003012437.1"/>
</dbReference>
<dbReference type="SMR" id="D4AZ23"/>
<dbReference type="MEROPS" id="M28.022"/>
<dbReference type="GeneID" id="9520214"/>
<dbReference type="KEGG" id="abe:ARB_01443"/>
<dbReference type="eggNOG" id="KOG2195">
    <property type="taxonomic scope" value="Eukaryota"/>
</dbReference>
<dbReference type="HOGENOM" id="CLU_025866_0_0_1"/>
<dbReference type="OMA" id="FMGELAM"/>
<dbReference type="Proteomes" id="UP000008866">
    <property type="component" value="Unassembled WGS sequence"/>
</dbReference>
<dbReference type="GO" id="GO:0005576">
    <property type="term" value="C:extracellular region"/>
    <property type="evidence" value="ECO:0007669"/>
    <property type="project" value="UniProtKB-SubCell"/>
</dbReference>
<dbReference type="GO" id="GO:0004177">
    <property type="term" value="F:aminopeptidase activity"/>
    <property type="evidence" value="ECO:0007669"/>
    <property type="project" value="UniProtKB-KW"/>
</dbReference>
<dbReference type="GO" id="GO:0046872">
    <property type="term" value="F:metal ion binding"/>
    <property type="evidence" value="ECO:0007669"/>
    <property type="project" value="UniProtKB-KW"/>
</dbReference>
<dbReference type="GO" id="GO:0008235">
    <property type="term" value="F:metalloexopeptidase activity"/>
    <property type="evidence" value="ECO:0007669"/>
    <property type="project" value="InterPro"/>
</dbReference>
<dbReference type="GO" id="GO:0006508">
    <property type="term" value="P:proteolysis"/>
    <property type="evidence" value="ECO:0007669"/>
    <property type="project" value="UniProtKB-KW"/>
</dbReference>
<dbReference type="CDD" id="cd03879">
    <property type="entry name" value="M28_AAP"/>
    <property type="match status" value="1"/>
</dbReference>
<dbReference type="FunFam" id="3.40.630.10:FF:000042">
    <property type="entry name" value="Peptide hydrolase"/>
    <property type="match status" value="1"/>
</dbReference>
<dbReference type="Gene3D" id="3.40.630.10">
    <property type="entry name" value="Zn peptidases"/>
    <property type="match status" value="1"/>
</dbReference>
<dbReference type="InterPro" id="IPR045175">
    <property type="entry name" value="M28_fam"/>
</dbReference>
<dbReference type="InterPro" id="IPR007484">
    <property type="entry name" value="Peptidase_M28"/>
</dbReference>
<dbReference type="PANTHER" id="PTHR12147:SF56">
    <property type="entry name" value="AMINOPEPTIDASE YDR415C-RELATED"/>
    <property type="match status" value="1"/>
</dbReference>
<dbReference type="PANTHER" id="PTHR12147">
    <property type="entry name" value="METALLOPEPTIDASE M28 FAMILY MEMBER"/>
    <property type="match status" value="1"/>
</dbReference>
<dbReference type="Pfam" id="PF04389">
    <property type="entry name" value="Peptidase_M28"/>
    <property type="match status" value="1"/>
</dbReference>
<dbReference type="SUPFAM" id="SSF53187">
    <property type="entry name" value="Zn-dependent exopeptidases"/>
    <property type="match status" value="1"/>
</dbReference>
<sequence length="379" mass="41282">MKIATLAVVSAFAATAIAGPIRPDGVVNDKFLIELGPGETQWVTKQQKHEMRAHINSIYKAGQGFVDITDEFGTDFTTAEVVPANYPKSALHAAVVNPMIAGLSKENLMRDLNTLVKFNNRYYESPTGVESATWVFNEVQKIIQASGVKGAKVEKFTNKFKQFSVIATIPGASKNTVIVGAHQDSINLKDPMKGRAPGADDNGSGSVVVLEAFRNVLKSKAIQAANATNTLEFHWYAGEEGGLLGSNNIFKKYKADGRKVKAMLNQDLTGFTKKGNPEQFGLITDNTNAELNEFCKTIVEKYATIKIIEAKCGYACSDHASAHRNGFPSSFIAETNFRNTNPYLHTADDVIANLDFNHMLEHAKVVVGFMGELAMTPNL</sequence>
<name>LAP4_ARTBC</name>
<evidence type="ECO:0000250" key="1"/>
<evidence type="ECO:0000255" key="2"/>
<evidence type="ECO:0000305" key="3"/>
<accession>D4AZ23</accession>
<keyword id="KW-0031">Aminopeptidase</keyword>
<keyword id="KW-1015">Disulfide bond</keyword>
<keyword id="KW-0325">Glycoprotein</keyword>
<keyword id="KW-0378">Hydrolase</keyword>
<keyword id="KW-0479">Metal-binding</keyword>
<keyword id="KW-0645">Protease</keyword>
<keyword id="KW-1185">Reference proteome</keyword>
<keyword id="KW-0964">Secreted</keyword>
<keyword id="KW-0732">Signal</keyword>
<keyword id="KW-0843">Virulence</keyword>
<keyword id="KW-0862">Zinc</keyword>
<gene>
    <name type="ORF">ARB_01443</name>
</gene>
<proteinExistence type="inferred from homology"/>
<reference key="1">
    <citation type="journal article" date="2011" name="Genome Biol.">
        <title>Comparative and functional genomics provide insights into the pathogenicity of dermatophytic fungi.</title>
        <authorList>
            <person name="Burmester A."/>
            <person name="Shelest E."/>
            <person name="Gloeckner G."/>
            <person name="Heddergott C."/>
            <person name="Schindler S."/>
            <person name="Staib P."/>
            <person name="Heidel A."/>
            <person name="Felder M."/>
            <person name="Petzold A."/>
            <person name="Szafranski K."/>
            <person name="Feuermann M."/>
            <person name="Pedruzzi I."/>
            <person name="Priebe S."/>
            <person name="Groth M."/>
            <person name="Winkler R."/>
            <person name="Li W."/>
            <person name="Kniemeyer O."/>
            <person name="Schroeckh V."/>
            <person name="Hertweck C."/>
            <person name="Hube B."/>
            <person name="White T.C."/>
            <person name="Platzer M."/>
            <person name="Guthke R."/>
            <person name="Heitman J."/>
            <person name="Woestemeyer J."/>
            <person name="Zipfel P.F."/>
            <person name="Monod M."/>
            <person name="Brakhage A.A."/>
        </authorList>
    </citation>
    <scope>NUCLEOTIDE SEQUENCE [LARGE SCALE GENOMIC DNA]</scope>
    <source>
        <strain>ATCC MYA-4681 / CBS 112371</strain>
    </source>
</reference>
<feature type="signal peptide" evidence="2">
    <location>
        <begin position="1"/>
        <end position="18"/>
    </location>
</feature>
<feature type="chain" id="PRO_0000397773" description="Probable leucine aminopeptidase ARB_01443">
    <location>
        <begin position="19"/>
        <end position="379"/>
    </location>
</feature>
<feature type="binding site" evidence="1">
    <location>
        <position position="182"/>
    </location>
    <ligand>
        <name>Zn(2+)</name>
        <dbReference type="ChEBI" id="CHEBI:29105"/>
        <label>1</label>
    </ligand>
</feature>
<feature type="binding site" evidence="1">
    <location>
        <position position="201"/>
    </location>
    <ligand>
        <name>Zn(2+)</name>
        <dbReference type="ChEBI" id="CHEBI:29105"/>
        <label>1</label>
    </ligand>
</feature>
<feature type="binding site" evidence="1">
    <location>
        <position position="201"/>
    </location>
    <ligand>
        <name>Zn(2+)</name>
        <dbReference type="ChEBI" id="CHEBI:29105"/>
        <label>2</label>
        <note>catalytic</note>
    </ligand>
</feature>
<feature type="binding site" evidence="1">
    <location>
        <position position="240"/>
    </location>
    <ligand>
        <name>Zn(2+)</name>
        <dbReference type="ChEBI" id="CHEBI:29105"/>
        <label>2</label>
        <note>catalytic</note>
    </ligand>
</feature>
<feature type="binding site" evidence="1">
    <location>
        <position position="267"/>
    </location>
    <ligand>
        <name>Zn(2+)</name>
        <dbReference type="ChEBI" id="CHEBI:29105"/>
        <label>1</label>
    </ligand>
</feature>
<feature type="binding site" evidence="1">
    <location>
        <position position="345"/>
    </location>
    <ligand>
        <name>Zn(2+)</name>
        <dbReference type="ChEBI" id="CHEBI:29105"/>
        <label>2</label>
        <note>catalytic</note>
    </ligand>
</feature>
<feature type="glycosylation site" description="N-linked (GlcNAc...) asparagine" evidence="2">
    <location>
        <position position="202"/>
    </location>
</feature>
<feature type="glycosylation site" description="N-linked (GlcNAc...) asparagine" evidence="2">
    <location>
        <position position="226"/>
    </location>
</feature>
<feature type="disulfide bond" evidence="1">
    <location>
        <begin position="312"/>
        <end position="316"/>
    </location>
</feature>
<comment type="function">
    <text evidence="1">Probable extracellular aminopeptidase which contributes to pathogenicity.</text>
</comment>
<comment type="cofactor">
    <cofactor evidence="1">
        <name>Zn(2+)</name>
        <dbReference type="ChEBI" id="CHEBI:29105"/>
    </cofactor>
    <text evidence="1">Binds 2 Zn(2+) ions per subunit.</text>
</comment>
<comment type="subunit">
    <text evidence="1">Monomer.</text>
</comment>
<comment type="subcellular location">
    <subcellularLocation>
        <location evidence="1">Secreted</location>
    </subcellularLocation>
</comment>
<comment type="similarity">
    <text evidence="3">Belongs to the peptidase M28 family. M28E subfamily.</text>
</comment>